<accession>A3MU00</accession>
<comment type="catalytic activity">
    <reaction evidence="1">
        <text>tRNA(Leu) + L-leucine + ATP = L-leucyl-tRNA(Leu) + AMP + diphosphate</text>
        <dbReference type="Rhea" id="RHEA:11688"/>
        <dbReference type="Rhea" id="RHEA-COMP:9613"/>
        <dbReference type="Rhea" id="RHEA-COMP:9622"/>
        <dbReference type="ChEBI" id="CHEBI:30616"/>
        <dbReference type="ChEBI" id="CHEBI:33019"/>
        <dbReference type="ChEBI" id="CHEBI:57427"/>
        <dbReference type="ChEBI" id="CHEBI:78442"/>
        <dbReference type="ChEBI" id="CHEBI:78494"/>
        <dbReference type="ChEBI" id="CHEBI:456215"/>
        <dbReference type="EC" id="6.1.1.4"/>
    </reaction>
</comment>
<comment type="subcellular location">
    <subcellularLocation>
        <location evidence="1">Cytoplasm</location>
    </subcellularLocation>
</comment>
<comment type="similarity">
    <text evidence="1">Belongs to the class-I aminoacyl-tRNA synthetase family.</text>
</comment>
<keyword id="KW-0030">Aminoacyl-tRNA synthetase</keyword>
<keyword id="KW-0067">ATP-binding</keyword>
<keyword id="KW-0963">Cytoplasm</keyword>
<keyword id="KW-0436">Ligase</keyword>
<keyword id="KW-0547">Nucleotide-binding</keyword>
<keyword id="KW-0648">Protein biosynthesis</keyword>
<gene>
    <name evidence="1" type="primary">leuS</name>
    <name type="ordered locus">Pcal_0691</name>
</gene>
<evidence type="ECO:0000255" key="1">
    <source>
        <dbReference type="HAMAP-Rule" id="MF_00049"/>
    </source>
</evidence>
<reference key="1">
    <citation type="submission" date="2007-02" db="EMBL/GenBank/DDBJ databases">
        <title>Complete sequence of Pyrobaculum calidifontis JCM 11548.</title>
        <authorList>
            <consortium name="US DOE Joint Genome Institute"/>
            <person name="Copeland A."/>
            <person name="Lucas S."/>
            <person name="Lapidus A."/>
            <person name="Barry K."/>
            <person name="Glavina del Rio T."/>
            <person name="Dalin E."/>
            <person name="Tice H."/>
            <person name="Pitluck S."/>
            <person name="Chain P."/>
            <person name="Malfatti S."/>
            <person name="Shin M."/>
            <person name="Vergez L."/>
            <person name="Schmutz J."/>
            <person name="Larimer F."/>
            <person name="Land M."/>
            <person name="Hauser L."/>
            <person name="Kyrpides N."/>
            <person name="Mikhailova N."/>
            <person name="Cozen A.E."/>
            <person name="Fitz-Gibbon S.T."/>
            <person name="House C.H."/>
            <person name="Saltikov C."/>
            <person name="Lowe T.M."/>
            <person name="Richardson P."/>
        </authorList>
    </citation>
    <scope>NUCLEOTIDE SEQUENCE [LARGE SCALE GENOMIC DNA]</scope>
    <source>
        <strain>DSM 21063 / JCM 11548 / VA1</strain>
    </source>
</reference>
<sequence>MSELAKFFIEVAEKWQRRWAEAKVFEPSPQPGRPKFFITAAYPYPNGTIHIGHGRTYLVADVMARFRRHLGYNVLFPMAFHYTGTPILTIAEVIAAGDKAVIEEYKEIYGVSDDDIKKMGDPLYLAQYFHRRSKEAMIKFGLGIDWSREFTTIDPEYQRFIQWQFEKLRKRGLIVRGRHPVGWCPRHQMPVGAHDTKDDKEPEIGQWTLIYFVDGEGLVYPTATLRPETVPGVTNIWINPDAEYVVAEFEGRKMVLSKDAAYRLSFQGNVKVIREARGREFVGRRVLNPVTGEWVPVYEAKFVDPKVGTGVVMSVPAHAPYDYAALRDMGEVKLIPLIRVEGYGEYPAKEVVERMGIKSQTDPALEEATREVYSAEYTRGVVREDVVDRIAPHLPEPARSMVRAVFKLYFAGRPVKEAREFISKWLAEAGLGGVMYDIMNKPVYCRCGTEIVVKVLEDQWFINYGERGWKQLARQLVEEMAIIPQEAKAQFLATIDWLDKRACARTRGLGTPLPWSQGWVIESLSDSTIYMAFYTVIKKIRALGLRPEQLTEEFWDYVFLGQGSAAEVAKRIGVDPAALEEIRREFDYWYPLDSRNSGKDLIPNHLTFFIFNHVAIFPREKWPRQIVANGWVLREGEKMSKSKRNVLPLDKAVALYGPDPLRATLAIAAEVEQDLDFRDAEARRNSQQLMSIYNLVQRLAQSAVEREETWLDKWLISEVAHVLERAREAYEKVRLRQAAVELLYNAEAVFSQYLSMVDKPSKSAVEAAKAWVVALEPIVPHFAEELWQILGGEGFAATAPWPKLSPDPAALLAKRYVDMLIEDVKNIPAYKAGAKRVAIYVNGNYQWLRAAVGKDVKAAIEAGAPPQLAKRLVDFAKSMGEEVRGLVERVEQFDEYAALQSYKRYVEKALGVPVDIYKADDPQAPDLGGKKKAALPLKPGIFIEVG</sequence>
<dbReference type="EC" id="6.1.1.4" evidence="1"/>
<dbReference type="EMBL" id="CP000561">
    <property type="protein sequence ID" value="ABO08117.1"/>
    <property type="molecule type" value="Genomic_DNA"/>
</dbReference>
<dbReference type="RefSeq" id="WP_011849375.1">
    <property type="nucleotide sequence ID" value="NC_009073.1"/>
</dbReference>
<dbReference type="SMR" id="A3MU00"/>
<dbReference type="STRING" id="410359.Pcal_0691"/>
<dbReference type="GeneID" id="4908582"/>
<dbReference type="KEGG" id="pcl:Pcal_0691"/>
<dbReference type="eggNOG" id="arCOG00809">
    <property type="taxonomic scope" value="Archaea"/>
</dbReference>
<dbReference type="HOGENOM" id="CLU_004174_0_0_2"/>
<dbReference type="OrthoDB" id="23906at2157"/>
<dbReference type="Proteomes" id="UP000001431">
    <property type="component" value="Chromosome"/>
</dbReference>
<dbReference type="GO" id="GO:0005737">
    <property type="term" value="C:cytoplasm"/>
    <property type="evidence" value="ECO:0007669"/>
    <property type="project" value="UniProtKB-SubCell"/>
</dbReference>
<dbReference type="GO" id="GO:0002161">
    <property type="term" value="F:aminoacyl-tRNA deacylase activity"/>
    <property type="evidence" value="ECO:0007669"/>
    <property type="project" value="InterPro"/>
</dbReference>
<dbReference type="GO" id="GO:0005524">
    <property type="term" value="F:ATP binding"/>
    <property type="evidence" value="ECO:0007669"/>
    <property type="project" value="UniProtKB-UniRule"/>
</dbReference>
<dbReference type="GO" id="GO:0004823">
    <property type="term" value="F:leucine-tRNA ligase activity"/>
    <property type="evidence" value="ECO:0007669"/>
    <property type="project" value="UniProtKB-UniRule"/>
</dbReference>
<dbReference type="GO" id="GO:0006429">
    <property type="term" value="P:leucyl-tRNA aminoacylation"/>
    <property type="evidence" value="ECO:0007669"/>
    <property type="project" value="UniProtKB-UniRule"/>
</dbReference>
<dbReference type="Gene3D" id="3.30.2320.20">
    <property type="entry name" value="Class I aminoacyl-tRNA synthetases (RS)"/>
    <property type="match status" value="1"/>
</dbReference>
<dbReference type="Gene3D" id="3.40.50.620">
    <property type="entry name" value="HUPs"/>
    <property type="match status" value="1"/>
</dbReference>
<dbReference type="Gene3D" id="1.10.730.10">
    <property type="entry name" value="Isoleucyl-tRNA Synthetase, Domain 1"/>
    <property type="match status" value="1"/>
</dbReference>
<dbReference type="Gene3D" id="1.10.10.720">
    <property type="entry name" value="leucyl-tRNA synthetase"/>
    <property type="match status" value="1"/>
</dbReference>
<dbReference type="Gene3D" id="3.90.740.10">
    <property type="entry name" value="Valyl/Leucyl/Isoleucyl-tRNA synthetase, editing domain"/>
    <property type="match status" value="1"/>
</dbReference>
<dbReference type="HAMAP" id="MF_00049_A">
    <property type="entry name" value="Leu_tRNA_synth_A"/>
    <property type="match status" value="1"/>
</dbReference>
<dbReference type="InterPro" id="IPR001412">
    <property type="entry name" value="aa-tRNA-synth_I_CS"/>
</dbReference>
<dbReference type="InterPro" id="IPR002300">
    <property type="entry name" value="aa-tRNA-synth_Ia"/>
</dbReference>
<dbReference type="InterPro" id="IPR020791">
    <property type="entry name" value="Leu-tRNA-lgase_arc"/>
</dbReference>
<dbReference type="InterPro" id="IPR004493">
    <property type="entry name" value="Leu-tRNA-synth_Ia_arc/euk"/>
</dbReference>
<dbReference type="InterPro" id="IPR013155">
    <property type="entry name" value="M/V/L/I-tRNA-synth_anticd-bd"/>
</dbReference>
<dbReference type="InterPro" id="IPR014729">
    <property type="entry name" value="Rossmann-like_a/b/a_fold"/>
</dbReference>
<dbReference type="InterPro" id="IPR009080">
    <property type="entry name" value="tRNAsynth_Ia_anticodon-bd"/>
</dbReference>
<dbReference type="InterPro" id="IPR009008">
    <property type="entry name" value="Val/Leu/Ile-tRNA-synth_edit"/>
</dbReference>
<dbReference type="NCBIfam" id="TIGR00395">
    <property type="entry name" value="leuS_arch"/>
    <property type="match status" value="1"/>
</dbReference>
<dbReference type="NCBIfam" id="NF008957">
    <property type="entry name" value="PRK12300.1"/>
    <property type="match status" value="1"/>
</dbReference>
<dbReference type="PANTHER" id="PTHR45794:SF1">
    <property type="entry name" value="LEUCINE--TRNA LIGASE, CYTOPLASMIC"/>
    <property type="match status" value="1"/>
</dbReference>
<dbReference type="PANTHER" id="PTHR45794">
    <property type="entry name" value="LEUCYL-TRNA SYNTHETASE"/>
    <property type="match status" value="1"/>
</dbReference>
<dbReference type="Pfam" id="PF08264">
    <property type="entry name" value="Anticodon_1"/>
    <property type="match status" value="1"/>
</dbReference>
<dbReference type="Pfam" id="PF00133">
    <property type="entry name" value="tRNA-synt_1"/>
    <property type="match status" value="1"/>
</dbReference>
<dbReference type="SUPFAM" id="SSF47323">
    <property type="entry name" value="Anticodon-binding domain of a subclass of class I aminoacyl-tRNA synthetases"/>
    <property type="match status" value="1"/>
</dbReference>
<dbReference type="SUPFAM" id="SSF52374">
    <property type="entry name" value="Nucleotidylyl transferase"/>
    <property type="match status" value="1"/>
</dbReference>
<dbReference type="SUPFAM" id="SSF50677">
    <property type="entry name" value="ValRS/IleRS/LeuRS editing domain"/>
    <property type="match status" value="1"/>
</dbReference>
<dbReference type="PROSITE" id="PS00178">
    <property type="entry name" value="AA_TRNA_LIGASE_I"/>
    <property type="match status" value="1"/>
</dbReference>
<proteinExistence type="inferred from homology"/>
<name>SYL_PYRCJ</name>
<protein>
    <recommendedName>
        <fullName evidence="1">Leucine--tRNA ligase</fullName>
        <ecNumber evidence="1">6.1.1.4</ecNumber>
    </recommendedName>
    <alternativeName>
        <fullName evidence="1">Leucyl-tRNA synthetase</fullName>
        <shortName evidence="1">LeuRS</shortName>
    </alternativeName>
</protein>
<organism>
    <name type="scientific">Pyrobaculum calidifontis (strain DSM 21063 / JCM 11548 / VA1)</name>
    <dbReference type="NCBI Taxonomy" id="410359"/>
    <lineage>
        <taxon>Archaea</taxon>
        <taxon>Thermoproteota</taxon>
        <taxon>Thermoprotei</taxon>
        <taxon>Thermoproteales</taxon>
        <taxon>Thermoproteaceae</taxon>
        <taxon>Pyrobaculum</taxon>
    </lineage>
</organism>
<feature type="chain" id="PRO_1000009404" description="Leucine--tRNA ligase">
    <location>
        <begin position="1"/>
        <end position="946"/>
    </location>
</feature>
<feature type="short sequence motif" description="'HIGH' region">
    <location>
        <begin position="43"/>
        <end position="53"/>
    </location>
</feature>
<feature type="short sequence motif" description="'KMSKS' region">
    <location>
        <begin position="638"/>
        <end position="642"/>
    </location>
</feature>
<feature type="binding site" evidence="1">
    <location>
        <position position="641"/>
    </location>
    <ligand>
        <name>ATP</name>
        <dbReference type="ChEBI" id="CHEBI:30616"/>
    </ligand>
</feature>